<protein>
    <recommendedName>
        <fullName evidence="1 4">Serine O-succinyltransferase</fullName>
        <shortName evidence="1 3">SST</shortName>
        <ecNumber evidence="1 2">2.3.1.-</ecNumber>
    </recommendedName>
    <alternativeName>
        <fullName evidence="4">Homoserine O-succinyltransferase</fullName>
        <shortName evidence="3">HST</shortName>
        <ecNumber evidence="2">2.3.1.46</ecNumber>
    </alternativeName>
    <alternativeName>
        <fullName evidence="4">Homoserine transsuccinylase</fullName>
        <shortName evidence="4">HTS</shortName>
    </alternativeName>
</protein>
<comment type="function">
    <text evidence="2">Transfers a succinyl group from succinyl-CoA to L-serine, forming succinyl-L-serine. In vitro, also has homoserine succinyl transferase activity.</text>
</comment>
<comment type="catalytic activity">
    <reaction evidence="1 2">
        <text>succinyl-CoA + L-serine = O-succinyl-L-serine + CoA</text>
        <dbReference type="Rhea" id="RHEA:52820"/>
        <dbReference type="ChEBI" id="CHEBI:33384"/>
        <dbReference type="ChEBI" id="CHEBI:57287"/>
        <dbReference type="ChEBI" id="CHEBI:57292"/>
        <dbReference type="ChEBI" id="CHEBI:136856"/>
    </reaction>
</comment>
<comment type="catalytic activity">
    <reaction evidence="2">
        <text>L-homoserine + succinyl-CoA = O-succinyl-L-homoserine + CoA</text>
        <dbReference type="Rhea" id="RHEA:22008"/>
        <dbReference type="ChEBI" id="CHEBI:57287"/>
        <dbReference type="ChEBI" id="CHEBI:57292"/>
        <dbReference type="ChEBI" id="CHEBI:57476"/>
        <dbReference type="ChEBI" id="CHEBI:57661"/>
        <dbReference type="EC" id="2.3.1.46"/>
    </reaction>
</comment>
<comment type="pathway">
    <text evidence="1 5">Amino-acid biosynthesis; L-cysteine biosynthesis; L-cysteine from L-serine: step 1/2.</text>
</comment>
<comment type="subunit">
    <text evidence="1">Homodimer.</text>
</comment>
<comment type="subcellular location">
    <subcellularLocation>
        <location evidence="1">Cytoplasm</location>
    </subcellularLocation>
</comment>
<comment type="similarity">
    <text evidence="1">Belongs to the AB hydrolase superfamily. MetX family.</text>
</comment>
<accession>A0A0I9RJ56</accession>
<keyword id="KW-0012">Acyltransferase</keyword>
<keyword id="KW-0028">Amino-acid biosynthesis</keyword>
<keyword id="KW-0198">Cysteine biosynthesis</keyword>
<keyword id="KW-0963">Cytoplasm</keyword>
<keyword id="KW-0808">Transferase</keyword>
<organism>
    <name type="scientific">Stenotrophomonas maltophilia</name>
    <name type="common">Pseudomonas maltophilia</name>
    <name type="synonym">Xanthomonas maltophilia</name>
    <dbReference type="NCBI Taxonomy" id="40324"/>
    <lineage>
        <taxon>Bacteria</taxon>
        <taxon>Pseudomonadati</taxon>
        <taxon>Pseudomonadota</taxon>
        <taxon>Gammaproteobacteria</taxon>
        <taxon>Lysobacterales</taxon>
        <taxon>Lysobacteraceae</taxon>
        <taxon>Stenotrophomonas</taxon>
        <taxon>Stenotrophomonas maltophilia group</taxon>
    </lineage>
</organism>
<reference key="1">
    <citation type="journal article" date="2017" name="Nat. Chem. Biol.">
        <title>Parallel evolution of non-homologous isofunctional enzymes in methionine biosynthesis.</title>
        <authorList>
            <person name="Bastard K."/>
            <person name="Perret A."/>
            <person name="Mariage A."/>
            <person name="Bessonnet T."/>
            <person name="Pinet-Turpault A."/>
            <person name="Petit J.L."/>
            <person name="Darii E."/>
            <person name="Bazire P."/>
            <person name="Vergne-Vaxelaire C."/>
            <person name="Brewee C."/>
            <person name="Debard A."/>
            <person name="Pellouin V."/>
            <person name="Besnard-Gonnet M."/>
            <person name="Artiguenave F."/>
            <person name="Medigue C."/>
            <person name="Vallenet D."/>
            <person name="Danchin A."/>
            <person name="Zaparucha A."/>
            <person name="Weissenbach J."/>
            <person name="Salanoubat M."/>
            <person name="de Berardinis V."/>
        </authorList>
    </citation>
    <scope>NUCLEOTIDE SEQUENCE [GENOMIC DNA]</scope>
    <scope>FUNCTION</scope>
    <scope>CATALYTIC ACTIVITY</scope>
    <scope>PATHWAY</scope>
    <source>
        <strain>DSM 50170</strain>
    </source>
</reference>
<dbReference type="EC" id="2.3.1.-" evidence="1 2"/>
<dbReference type="EC" id="2.3.1.46" evidence="2"/>
<dbReference type="EMBL" id="LN871226">
    <property type="protein sequence ID" value="CTQ31229.1"/>
    <property type="molecule type" value="Genomic_DNA"/>
</dbReference>
<dbReference type="EMBL" id="MTGD01000005">
    <property type="protein sequence ID" value="OOD19792.1"/>
    <property type="molecule type" value="Genomic_DNA"/>
</dbReference>
<dbReference type="RefSeq" id="WP_024958402.1">
    <property type="nucleotide sequence ID" value="NZ_MTGD01000005.1"/>
</dbReference>
<dbReference type="SMR" id="A0A0I9RJ56"/>
<dbReference type="STRING" id="1210005.GCA_000295735_02582"/>
<dbReference type="ESTHER" id="strmk-metx">
    <property type="family name" value="Homoserine_transacetylase"/>
</dbReference>
<dbReference type="GeneID" id="93834212"/>
<dbReference type="PATRIC" id="fig|40324.61.peg.524"/>
<dbReference type="eggNOG" id="COG2021">
    <property type="taxonomic scope" value="Bacteria"/>
</dbReference>
<dbReference type="OrthoDB" id="9800754at2"/>
<dbReference type="UniPathway" id="UPA00136">
    <property type="reaction ID" value="UER00199"/>
</dbReference>
<dbReference type="GO" id="GO:0005737">
    <property type="term" value="C:cytoplasm"/>
    <property type="evidence" value="ECO:0007669"/>
    <property type="project" value="UniProtKB-SubCell"/>
</dbReference>
<dbReference type="GO" id="GO:0004414">
    <property type="term" value="F:homoserine O-acetyltransferase activity"/>
    <property type="evidence" value="ECO:0007669"/>
    <property type="project" value="TreeGrafter"/>
</dbReference>
<dbReference type="GO" id="GO:0008899">
    <property type="term" value="F:homoserine O-succinyltransferase activity"/>
    <property type="evidence" value="ECO:0007669"/>
    <property type="project" value="UniProtKB-EC"/>
</dbReference>
<dbReference type="GO" id="GO:0160210">
    <property type="term" value="F:L-serine O-succinyltransferase activity"/>
    <property type="evidence" value="ECO:0007669"/>
    <property type="project" value="RHEA"/>
</dbReference>
<dbReference type="GO" id="GO:0006535">
    <property type="term" value="P:cysteine biosynthetic process from serine"/>
    <property type="evidence" value="ECO:0007669"/>
    <property type="project" value="UniProtKB-UniRule"/>
</dbReference>
<dbReference type="GO" id="GO:0009092">
    <property type="term" value="P:homoserine metabolic process"/>
    <property type="evidence" value="ECO:0007669"/>
    <property type="project" value="TreeGrafter"/>
</dbReference>
<dbReference type="GO" id="GO:0009086">
    <property type="term" value="P:methionine biosynthetic process"/>
    <property type="evidence" value="ECO:0007669"/>
    <property type="project" value="TreeGrafter"/>
</dbReference>
<dbReference type="Gene3D" id="1.10.1740.110">
    <property type="match status" value="1"/>
</dbReference>
<dbReference type="Gene3D" id="3.40.50.1820">
    <property type="entry name" value="alpha/beta hydrolase"/>
    <property type="match status" value="1"/>
</dbReference>
<dbReference type="HAMAP" id="MF_00296">
    <property type="entry name" value="MetX_acyltransf"/>
    <property type="match status" value="1"/>
</dbReference>
<dbReference type="InterPro" id="IPR000073">
    <property type="entry name" value="AB_hydrolase_1"/>
</dbReference>
<dbReference type="InterPro" id="IPR029058">
    <property type="entry name" value="AB_hydrolase_fold"/>
</dbReference>
<dbReference type="InterPro" id="IPR008220">
    <property type="entry name" value="HAT_MetX-like"/>
</dbReference>
<dbReference type="NCBIfam" id="TIGR01392">
    <property type="entry name" value="homoserO_Ac_trn"/>
    <property type="match status" value="1"/>
</dbReference>
<dbReference type="NCBIfam" id="NF001209">
    <property type="entry name" value="PRK00175.1"/>
    <property type="match status" value="1"/>
</dbReference>
<dbReference type="PANTHER" id="PTHR32268">
    <property type="entry name" value="HOMOSERINE O-ACETYLTRANSFERASE"/>
    <property type="match status" value="1"/>
</dbReference>
<dbReference type="PANTHER" id="PTHR32268:SF11">
    <property type="entry name" value="HOMOSERINE O-ACETYLTRANSFERASE"/>
    <property type="match status" value="1"/>
</dbReference>
<dbReference type="Pfam" id="PF00561">
    <property type="entry name" value="Abhydrolase_1"/>
    <property type="match status" value="1"/>
</dbReference>
<dbReference type="PIRSF" id="PIRSF000443">
    <property type="entry name" value="Homoser_Ac_trans"/>
    <property type="match status" value="1"/>
</dbReference>
<dbReference type="SUPFAM" id="SSF53474">
    <property type="entry name" value="alpha/beta-Hydrolases"/>
    <property type="match status" value="1"/>
</dbReference>
<feature type="chain" id="PRO_0000440309" description="Serine O-succinyltransferase">
    <location>
        <begin position="1"/>
        <end position="370"/>
    </location>
</feature>
<feature type="domain" description="AB hydrolase-1" evidence="1">
    <location>
        <begin position="46"/>
        <end position="355"/>
    </location>
</feature>
<feature type="region of interest" description="Important for substrate specificity" evidence="1 5">
    <location>
        <begin position="52"/>
        <end position="55"/>
    </location>
</feature>
<feature type="active site" description="Nucleophile" evidence="1">
    <location>
        <position position="149"/>
    </location>
</feature>
<feature type="active site" evidence="1">
    <location>
        <position position="316"/>
    </location>
</feature>
<feature type="active site" evidence="1">
    <location>
        <position position="349"/>
    </location>
</feature>
<feature type="binding site" evidence="1">
    <location>
        <position position="218"/>
    </location>
    <ligand>
        <name>substrate</name>
    </ligand>
</feature>
<feature type="binding site" evidence="1">
    <location>
        <position position="350"/>
    </location>
    <ligand>
        <name>substrate</name>
    </ligand>
</feature>
<feature type="site" description="Important for acyl-CoA specificity" evidence="1 5">
    <location>
        <position position="186"/>
    </location>
</feature>
<name>SST_STEMA</name>
<proteinExistence type="evidence at protein level"/>
<evidence type="ECO:0000255" key="1">
    <source>
        <dbReference type="HAMAP-Rule" id="MF_00296"/>
    </source>
</evidence>
<evidence type="ECO:0000269" key="2">
    <source>
    </source>
</evidence>
<evidence type="ECO:0000303" key="3">
    <source>
    </source>
</evidence>
<evidence type="ECO:0000305" key="4"/>
<evidence type="ECO:0000305" key="5">
    <source>
    </source>
</evidence>
<sequence>MTEFIPPGTRFHALPSPFPFKRGGALHGARVAYETWGTLAADASNAILIVTGLSPDAHAAANDANPAAGWWEGMVGPGKAIDTDRWFVVCVNSLGSCRGSTGPASLNPATGQPYRLDFPELSIEDGARAAIEVVRAQGIEQLACVVGNSMGGMTALAVLMLHPGIARSHVNISGSAQALPFSIAIRSLQREAIRLDPRWNGGHYDDDAYPESGMRMARKLGVITYRSALEWDGRFGRVRLDSDQTDDDPFGLEFQVESYLEGHARRFVRFFDPNCYLYLSRSMDWFDLAEYADGDVLAGLAKIRVEKALAIGANTDILFPVQQQQQVADGLRAGGADARFIGLESPQGHDAFLVDFERFCPAVRGFLDAL</sequence>